<name>MURA2_STRR6</name>
<reference key="1">
    <citation type="journal article" date="2001" name="J. Bacteriol.">
        <title>Genome of the bacterium Streptococcus pneumoniae strain R6.</title>
        <authorList>
            <person name="Hoskins J."/>
            <person name="Alborn W.E. Jr."/>
            <person name="Arnold J."/>
            <person name="Blaszczak L.C."/>
            <person name="Burgett S."/>
            <person name="DeHoff B.S."/>
            <person name="Estrem S.T."/>
            <person name="Fritz L."/>
            <person name="Fu D.-J."/>
            <person name="Fuller W."/>
            <person name="Geringer C."/>
            <person name="Gilmour R."/>
            <person name="Glass J.S."/>
            <person name="Khoja H."/>
            <person name="Kraft A.R."/>
            <person name="Lagace R.E."/>
            <person name="LeBlanc D.J."/>
            <person name="Lee L.N."/>
            <person name="Lefkowitz E.J."/>
            <person name="Lu J."/>
            <person name="Matsushima P."/>
            <person name="McAhren S.M."/>
            <person name="McHenney M."/>
            <person name="McLeaster K."/>
            <person name="Mundy C.W."/>
            <person name="Nicas T.I."/>
            <person name="Norris F.H."/>
            <person name="O'Gara M."/>
            <person name="Peery R.B."/>
            <person name="Robertson G.T."/>
            <person name="Rockey P."/>
            <person name="Sun P.-M."/>
            <person name="Winkler M.E."/>
            <person name="Yang Y."/>
            <person name="Young-Bellido M."/>
            <person name="Zhao G."/>
            <person name="Zook C.A."/>
            <person name="Baltz R.H."/>
            <person name="Jaskunas S.R."/>
            <person name="Rosteck P.R. Jr."/>
            <person name="Skatrud P.L."/>
            <person name="Glass J.I."/>
        </authorList>
    </citation>
    <scope>NUCLEOTIDE SEQUENCE [LARGE SCALE GENOMIC DNA]</scope>
    <source>
        <strain>ATCC BAA-255 / R6</strain>
    </source>
</reference>
<comment type="function">
    <text evidence="1">Cell wall formation. Adds enolpyruvyl to UDP-N-acetylglucosamine.</text>
</comment>
<comment type="catalytic activity">
    <reaction evidence="1">
        <text>phosphoenolpyruvate + UDP-N-acetyl-alpha-D-glucosamine = UDP-N-acetyl-3-O-(1-carboxyvinyl)-alpha-D-glucosamine + phosphate</text>
        <dbReference type="Rhea" id="RHEA:18681"/>
        <dbReference type="ChEBI" id="CHEBI:43474"/>
        <dbReference type="ChEBI" id="CHEBI:57705"/>
        <dbReference type="ChEBI" id="CHEBI:58702"/>
        <dbReference type="ChEBI" id="CHEBI:68483"/>
        <dbReference type="EC" id="2.5.1.7"/>
    </reaction>
</comment>
<comment type="pathway">
    <text evidence="1">Cell wall biogenesis; peptidoglycan biosynthesis.</text>
</comment>
<comment type="subcellular location">
    <subcellularLocation>
        <location evidence="1">Cytoplasm</location>
    </subcellularLocation>
</comment>
<comment type="similarity">
    <text evidence="1">Belongs to the EPSP synthase family. MurA subfamily.</text>
</comment>
<protein>
    <recommendedName>
        <fullName evidence="1">UDP-N-acetylglucosamine 1-carboxyvinyltransferase 2</fullName>
        <ecNumber evidence="1">2.5.1.7</ecNumber>
    </recommendedName>
    <alternativeName>
        <fullName evidence="1">Enoylpyruvate transferase 2</fullName>
    </alternativeName>
    <alternativeName>
        <fullName evidence="1">UDP-N-acetylglucosamine enolpyruvyl transferase 2</fullName>
        <shortName evidence="1">EPT 2</shortName>
    </alternativeName>
</protein>
<dbReference type="EC" id="2.5.1.7" evidence="1"/>
<dbReference type="EMBL" id="AE007317">
    <property type="protein sequence ID" value="AAK99793.1"/>
    <property type="molecule type" value="Genomic_DNA"/>
</dbReference>
<dbReference type="PIR" id="E97995">
    <property type="entry name" value="E97995"/>
</dbReference>
<dbReference type="RefSeq" id="NP_358583.1">
    <property type="nucleotide sequence ID" value="NC_003098.1"/>
</dbReference>
<dbReference type="RefSeq" id="WP_001227087.1">
    <property type="nucleotide sequence ID" value="NC_003098.1"/>
</dbReference>
<dbReference type="SMR" id="Q8DPV4"/>
<dbReference type="STRING" id="171101.spr0989"/>
<dbReference type="KEGG" id="spr:spr0989"/>
<dbReference type="PATRIC" id="fig|171101.6.peg.1077"/>
<dbReference type="eggNOG" id="COG0766">
    <property type="taxonomic scope" value="Bacteria"/>
</dbReference>
<dbReference type="HOGENOM" id="CLU_027387_0_0_9"/>
<dbReference type="SABIO-RK" id="Q8DPV4"/>
<dbReference type="UniPathway" id="UPA00219"/>
<dbReference type="Proteomes" id="UP000000586">
    <property type="component" value="Chromosome"/>
</dbReference>
<dbReference type="GO" id="GO:0005737">
    <property type="term" value="C:cytoplasm"/>
    <property type="evidence" value="ECO:0007669"/>
    <property type="project" value="UniProtKB-SubCell"/>
</dbReference>
<dbReference type="GO" id="GO:0008760">
    <property type="term" value="F:UDP-N-acetylglucosamine 1-carboxyvinyltransferase activity"/>
    <property type="evidence" value="ECO:0007669"/>
    <property type="project" value="UniProtKB-UniRule"/>
</dbReference>
<dbReference type="GO" id="GO:0051301">
    <property type="term" value="P:cell division"/>
    <property type="evidence" value="ECO:0007669"/>
    <property type="project" value="UniProtKB-KW"/>
</dbReference>
<dbReference type="GO" id="GO:0071555">
    <property type="term" value="P:cell wall organization"/>
    <property type="evidence" value="ECO:0007669"/>
    <property type="project" value="UniProtKB-KW"/>
</dbReference>
<dbReference type="GO" id="GO:0009252">
    <property type="term" value="P:peptidoglycan biosynthetic process"/>
    <property type="evidence" value="ECO:0007669"/>
    <property type="project" value="UniProtKB-UniRule"/>
</dbReference>
<dbReference type="GO" id="GO:0008360">
    <property type="term" value="P:regulation of cell shape"/>
    <property type="evidence" value="ECO:0007669"/>
    <property type="project" value="UniProtKB-KW"/>
</dbReference>
<dbReference type="GO" id="GO:0019277">
    <property type="term" value="P:UDP-N-acetylgalactosamine biosynthetic process"/>
    <property type="evidence" value="ECO:0007669"/>
    <property type="project" value="InterPro"/>
</dbReference>
<dbReference type="CDD" id="cd01555">
    <property type="entry name" value="UdpNAET"/>
    <property type="match status" value="1"/>
</dbReference>
<dbReference type="FunFam" id="3.65.10.10:FF:000001">
    <property type="entry name" value="UDP-N-acetylglucosamine 1-carboxyvinyltransferase"/>
    <property type="match status" value="1"/>
</dbReference>
<dbReference type="Gene3D" id="3.65.10.10">
    <property type="entry name" value="Enolpyruvate transferase domain"/>
    <property type="match status" value="2"/>
</dbReference>
<dbReference type="HAMAP" id="MF_00111">
    <property type="entry name" value="MurA"/>
    <property type="match status" value="1"/>
</dbReference>
<dbReference type="InterPro" id="IPR001986">
    <property type="entry name" value="Enolpyruvate_Tfrase_dom"/>
</dbReference>
<dbReference type="InterPro" id="IPR036968">
    <property type="entry name" value="Enolpyruvate_Tfrase_sf"/>
</dbReference>
<dbReference type="InterPro" id="IPR050068">
    <property type="entry name" value="MurA_subfamily"/>
</dbReference>
<dbReference type="InterPro" id="IPR013792">
    <property type="entry name" value="RNA3'P_cycl/enolpyr_Trfase_a/b"/>
</dbReference>
<dbReference type="InterPro" id="IPR005750">
    <property type="entry name" value="UDP_GlcNAc_COvinyl_MurA"/>
</dbReference>
<dbReference type="NCBIfam" id="TIGR01072">
    <property type="entry name" value="murA"/>
    <property type="match status" value="1"/>
</dbReference>
<dbReference type="NCBIfam" id="NF006873">
    <property type="entry name" value="PRK09369.1"/>
    <property type="match status" value="1"/>
</dbReference>
<dbReference type="NCBIfam" id="NF009470">
    <property type="entry name" value="PRK12830.1"/>
    <property type="match status" value="1"/>
</dbReference>
<dbReference type="PANTHER" id="PTHR43783">
    <property type="entry name" value="UDP-N-ACETYLGLUCOSAMINE 1-CARBOXYVINYLTRANSFERASE"/>
    <property type="match status" value="1"/>
</dbReference>
<dbReference type="PANTHER" id="PTHR43783:SF2">
    <property type="entry name" value="UDP-N-ACETYLGLUCOSAMINE 1-CARBOXYVINYLTRANSFERASE 2"/>
    <property type="match status" value="1"/>
</dbReference>
<dbReference type="Pfam" id="PF00275">
    <property type="entry name" value="EPSP_synthase"/>
    <property type="match status" value="1"/>
</dbReference>
<dbReference type="SUPFAM" id="SSF55205">
    <property type="entry name" value="EPT/RTPC-like"/>
    <property type="match status" value="1"/>
</dbReference>
<gene>
    <name evidence="1" type="primary">murA2</name>
    <name type="synonym">murZ</name>
    <name type="ordered locus">spr0989</name>
</gene>
<accession>Q8DPV4</accession>
<feature type="chain" id="PRO_0000178933" description="UDP-N-acetylglucosamine 1-carboxyvinyltransferase 2">
    <location>
        <begin position="1"/>
        <end position="419"/>
    </location>
</feature>
<feature type="active site" description="Proton donor" evidence="1">
    <location>
        <position position="116"/>
    </location>
</feature>
<feature type="binding site" evidence="1">
    <location>
        <begin position="22"/>
        <end position="23"/>
    </location>
    <ligand>
        <name>phosphoenolpyruvate</name>
        <dbReference type="ChEBI" id="CHEBI:58702"/>
    </ligand>
</feature>
<feature type="binding site" evidence="1">
    <location>
        <position position="92"/>
    </location>
    <ligand>
        <name>UDP-N-acetyl-alpha-D-glucosamine</name>
        <dbReference type="ChEBI" id="CHEBI:57705"/>
    </ligand>
</feature>
<feature type="binding site" evidence="1">
    <location>
        <begin position="121"/>
        <end position="125"/>
    </location>
    <ligand>
        <name>UDP-N-acetyl-alpha-D-glucosamine</name>
        <dbReference type="ChEBI" id="CHEBI:57705"/>
    </ligand>
</feature>
<feature type="binding site" evidence="1">
    <location>
        <position position="306"/>
    </location>
    <ligand>
        <name>UDP-N-acetyl-alpha-D-glucosamine</name>
        <dbReference type="ChEBI" id="CHEBI:57705"/>
    </ligand>
</feature>
<feature type="binding site" evidence="1">
    <location>
        <position position="328"/>
    </location>
    <ligand>
        <name>UDP-N-acetyl-alpha-D-glucosamine</name>
        <dbReference type="ChEBI" id="CHEBI:57705"/>
    </ligand>
</feature>
<feature type="modified residue" description="2-(S-cysteinyl)pyruvic acid O-phosphothioketal" evidence="1">
    <location>
        <position position="116"/>
    </location>
</feature>
<sequence length="419" mass="45011">MRKIVINGGLPLQGEITISGAKNSVVALIPAIILADDVVTLDCVPDISDVASLVEIMELMGATVKRYDDVLEIDPRGVQNIPMPYGKINSLRASYYFYGSLLGRFGEATVGLPGGCDLGPRPIDLHLKAFEAMGATASYEGDNMKLSAKDTGLHGASIYMDTVSVGATINTMIAAVKANGRTIIENAAREPEIIDVATLLNNMGAHIRGAGTNIIIIDGVERLHGTRHQVIPDRIEAGTYISLAAAVGKGIRINNVLYEHLEGFVAKLEEMGVRMTVSEDSIFVEEQSNLKAINIKTAPYPGFATDLQQPLTPLLLRANGRGTIVDTIYEKRVNHVFELAKMDADISTTNGHILYTGGRDLRGASVKATDLRAGAALVIAGLMAEGKTEITNIEFILRGYSDIIEKLRNLGADIRLVED</sequence>
<evidence type="ECO:0000255" key="1">
    <source>
        <dbReference type="HAMAP-Rule" id="MF_00111"/>
    </source>
</evidence>
<keyword id="KW-0131">Cell cycle</keyword>
<keyword id="KW-0132">Cell division</keyword>
<keyword id="KW-0133">Cell shape</keyword>
<keyword id="KW-0961">Cell wall biogenesis/degradation</keyword>
<keyword id="KW-0963">Cytoplasm</keyword>
<keyword id="KW-0573">Peptidoglycan synthesis</keyword>
<keyword id="KW-0670">Pyruvate</keyword>
<keyword id="KW-1185">Reference proteome</keyword>
<keyword id="KW-0808">Transferase</keyword>
<proteinExistence type="inferred from homology"/>
<organism>
    <name type="scientific">Streptococcus pneumoniae (strain ATCC BAA-255 / R6)</name>
    <dbReference type="NCBI Taxonomy" id="171101"/>
    <lineage>
        <taxon>Bacteria</taxon>
        <taxon>Bacillati</taxon>
        <taxon>Bacillota</taxon>
        <taxon>Bacilli</taxon>
        <taxon>Lactobacillales</taxon>
        <taxon>Streptococcaceae</taxon>
        <taxon>Streptococcus</taxon>
    </lineage>
</organism>